<name>SYY_BORAP</name>
<keyword id="KW-0030">Aminoacyl-tRNA synthetase</keyword>
<keyword id="KW-0067">ATP-binding</keyword>
<keyword id="KW-0963">Cytoplasm</keyword>
<keyword id="KW-0436">Ligase</keyword>
<keyword id="KW-0547">Nucleotide-binding</keyword>
<keyword id="KW-0648">Protein biosynthesis</keyword>
<keyword id="KW-0694">RNA-binding</keyword>
<sequence length="405" mass="46515">MNLALNLLHKRGFLKQCTSLKVLSDLMDREKIVFYAGVDATSSSLHIGHLIPFLAMMHLRQHGHIPIVLIGDSTTKIGDPSGKSEMRKILSLEEISNNAFSIKNQLQRITKFSSKCFIHNSNWLDNLNYIEFLRDIGIHFSVNRMLSFETYKKRLDFGLSFIEFNYQLLQSYDYYMLNKIRNCRLQIGGDDQWGNIISGIDLIRKKAGVETFGLTFPLITRSDGKKMGKSEKGAVYLDSSLYSIYDFYQYFRNTSDSDVKTFLYLFTFLEEDEIELISNFKGNSLNKAKEILAFEITKIVHGEAEALKVQEASFAAFRGSGDRSNIPFFKFSFSNLEEEVLLINLMLDSKIVPSKSEGRRLIDSGGVYINGKRVENQNHCLTRKDFNNNEIELRVGKKKFLRIVL</sequence>
<organism>
    <name type="scientific">Borreliella afzelii (strain PKo)</name>
    <name type="common">Borrelia afzelii</name>
    <dbReference type="NCBI Taxonomy" id="390236"/>
    <lineage>
        <taxon>Bacteria</taxon>
        <taxon>Pseudomonadati</taxon>
        <taxon>Spirochaetota</taxon>
        <taxon>Spirochaetia</taxon>
        <taxon>Spirochaetales</taxon>
        <taxon>Borreliaceae</taxon>
        <taxon>Borreliella</taxon>
    </lineage>
</organism>
<accession>Q0SNE3</accession>
<accession>G0IS14</accession>
<evidence type="ECO:0000255" key="1">
    <source>
        <dbReference type="HAMAP-Rule" id="MF_02006"/>
    </source>
</evidence>
<gene>
    <name evidence="1" type="primary">tyrS</name>
    <name type="ordered locus">BAPKO_0379</name>
    <name type="ordered locus">BafPKo_0369</name>
</gene>
<protein>
    <recommendedName>
        <fullName evidence="1">Tyrosine--tRNA ligase</fullName>
        <ecNumber evidence="1">6.1.1.1</ecNumber>
    </recommendedName>
    <alternativeName>
        <fullName evidence="1">Tyrosyl-tRNA synthetase</fullName>
        <shortName evidence="1">TyrRS</shortName>
    </alternativeName>
</protein>
<comment type="function">
    <text evidence="1">Catalyzes the attachment of tyrosine to tRNA(Tyr) in a two-step reaction: tyrosine is first activated by ATP to form Tyr-AMP and then transferred to the acceptor end of tRNA(Tyr).</text>
</comment>
<comment type="catalytic activity">
    <reaction evidence="1">
        <text>tRNA(Tyr) + L-tyrosine + ATP = L-tyrosyl-tRNA(Tyr) + AMP + diphosphate + H(+)</text>
        <dbReference type="Rhea" id="RHEA:10220"/>
        <dbReference type="Rhea" id="RHEA-COMP:9706"/>
        <dbReference type="Rhea" id="RHEA-COMP:9707"/>
        <dbReference type="ChEBI" id="CHEBI:15378"/>
        <dbReference type="ChEBI" id="CHEBI:30616"/>
        <dbReference type="ChEBI" id="CHEBI:33019"/>
        <dbReference type="ChEBI" id="CHEBI:58315"/>
        <dbReference type="ChEBI" id="CHEBI:78442"/>
        <dbReference type="ChEBI" id="CHEBI:78536"/>
        <dbReference type="ChEBI" id="CHEBI:456215"/>
        <dbReference type="EC" id="6.1.1.1"/>
    </reaction>
</comment>
<comment type="subunit">
    <text evidence="1">Homodimer.</text>
</comment>
<comment type="subcellular location">
    <subcellularLocation>
        <location evidence="1">Cytoplasm</location>
    </subcellularLocation>
</comment>
<comment type="similarity">
    <text evidence="1">Belongs to the class-I aminoacyl-tRNA synthetase family. TyrS type 1 subfamily.</text>
</comment>
<reference key="1">
    <citation type="journal article" date="2006" name="BMC Genomics">
        <title>Comparative genome analysis: selection pressure on the Borrelia vls cassettes is essential for infectivity.</title>
        <authorList>
            <person name="Gloeckner G."/>
            <person name="Schulte-Spechtel U."/>
            <person name="Schilhabel M."/>
            <person name="Felder M."/>
            <person name="Suehnel J."/>
            <person name="Wilske B."/>
            <person name="Platzer M."/>
        </authorList>
    </citation>
    <scope>NUCLEOTIDE SEQUENCE [LARGE SCALE GENOMIC DNA]</scope>
    <source>
        <strain>PKo</strain>
    </source>
</reference>
<reference key="2">
    <citation type="journal article" date="2011" name="J. Bacteriol.">
        <title>Whole-genome sequences of two Borrelia afzelii and two Borrelia garinii Lyme disease agent isolates.</title>
        <authorList>
            <person name="Casjens S.R."/>
            <person name="Mongodin E.F."/>
            <person name="Qiu W.G."/>
            <person name="Dunn J.J."/>
            <person name="Luft B.J."/>
            <person name="Fraser-Liggett C.M."/>
            <person name="Schutzer S.E."/>
        </authorList>
    </citation>
    <scope>NUCLEOTIDE SEQUENCE [LARGE SCALE GENOMIC DNA]</scope>
    <source>
        <strain>PKo</strain>
    </source>
</reference>
<proteinExistence type="inferred from homology"/>
<feature type="chain" id="PRO_1000088580" description="Tyrosine--tRNA ligase">
    <location>
        <begin position="1"/>
        <end position="405"/>
    </location>
</feature>
<feature type="domain" description="S4 RNA-binding" evidence="1">
    <location>
        <begin position="340"/>
        <end position="404"/>
    </location>
</feature>
<feature type="short sequence motif" description="'HIGH' region">
    <location>
        <begin position="40"/>
        <end position="49"/>
    </location>
</feature>
<feature type="short sequence motif" description="'KMSKS' region">
    <location>
        <begin position="226"/>
        <end position="230"/>
    </location>
</feature>
<feature type="binding site" evidence="1">
    <location>
        <position position="35"/>
    </location>
    <ligand>
        <name>L-tyrosine</name>
        <dbReference type="ChEBI" id="CHEBI:58315"/>
    </ligand>
</feature>
<feature type="binding site" evidence="1">
    <location>
        <position position="166"/>
    </location>
    <ligand>
        <name>L-tyrosine</name>
        <dbReference type="ChEBI" id="CHEBI:58315"/>
    </ligand>
</feature>
<feature type="binding site" evidence="1">
    <location>
        <position position="170"/>
    </location>
    <ligand>
        <name>L-tyrosine</name>
        <dbReference type="ChEBI" id="CHEBI:58315"/>
    </ligand>
</feature>
<feature type="binding site" evidence="1">
    <location>
        <position position="229"/>
    </location>
    <ligand>
        <name>ATP</name>
        <dbReference type="ChEBI" id="CHEBI:30616"/>
    </ligand>
</feature>
<dbReference type="EC" id="6.1.1.1" evidence="1"/>
<dbReference type="EMBL" id="CP000395">
    <property type="protein sequence ID" value="ABH01635.1"/>
    <property type="molecule type" value="Genomic_DNA"/>
</dbReference>
<dbReference type="EMBL" id="CP002933">
    <property type="protein sequence ID" value="AEL69595.1"/>
    <property type="molecule type" value="Genomic_DNA"/>
</dbReference>
<dbReference type="RefSeq" id="WP_011600984.1">
    <property type="nucleotide sequence ID" value="NZ_CP160066.1"/>
</dbReference>
<dbReference type="SMR" id="Q0SNE3"/>
<dbReference type="STRING" id="29518.BLA32_02465"/>
<dbReference type="GeneID" id="76831901"/>
<dbReference type="KEGG" id="baf:BAPKO_0379"/>
<dbReference type="KEGG" id="bafz:BafPKo_0369"/>
<dbReference type="PATRIC" id="fig|390236.22.peg.362"/>
<dbReference type="eggNOG" id="COG0162">
    <property type="taxonomic scope" value="Bacteria"/>
</dbReference>
<dbReference type="HOGENOM" id="CLU_024003_0_3_12"/>
<dbReference type="OrthoDB" id="9804243at2"/>
<dbReference type="Proteomes" id="UP000005216">
    <property type="component" value="Chromosome"/>
</dbReference>
<dbReference type="GO" id="GO:0005829">
    <property type="term" value="C:cytosol"/>
    <property type="evidence" value="ECO:0007669"/>
    <property type="project" value="TreeGrafter"/>
</dbReference>
<dbReference type="GO" id="GO:0005524">
    <property type="term" value="F:ATP binding"/>
    <property type="evidence" value="ECO:0007669"/>
    <property type="project" value="UniProtKB-UniRule"/>
</dbReference>
<dbReference type="GO" id="GO:0003723">
    <property type="term" value="F:RNA binding"/>
    <property type="evidence" value="ECO:0007669"/>
    <property type="project" value="UniProtKB-KW"/>
</dbReference>
<dbReference type="GO" id="GO:0004831">
    <property type="term" value="F:tyrosine-tRNA ligase activity"/>
    <property type="evidence" value="ECO:0007669"/>
    <property type="project" value="UniProtKB-UniRule"/>
</dbReference>
<dbReference type="GO" id="GO:0006437">
    <property type="term" value="P:tyrosyl-tRNA aminoacylation"/>
    <property type="evidence" value="ECO:0007669"/>
    <property type="project" value="UniProtKB-UniRule"/>
</dbReference>
<dbReference type="CDD" id="cd00165">
    <property type="entry name" value="S4"/>
    <property type="match status" value="1"/>
</dbReference>
<dbReference type="CDD" id="cd00805">
    <property type="entry name" value="TyrRS_core"/>
    <property type="match status" value="1"/>
</dbReference>
<dbReference type="FunFam" id="1.10.240.10:FF:000001">
    <property type="entry name" value="Tyrosine--tRNA ligase"/>
    <property type="match status" value="1"/>
</dbReference>
<dbReference type="Gene3D" id="3.40.50.620">
    <property type="entry name" value="HUPs"/>
    <property type="match status" value="1"/>
</dbReference>
<dbReference type="Gene3D" id="3.10.290.10">
    <property type="entry name" value="RNA-binding S4 domain"/>
    <property type="match status" value="1"/>
</dbReference>
<dbReference type="Gene3D" id="1.10.240.10">
    <property type="entry name" value="Tyrosyl-Transfer RNA Synthetase"/>
    <property type="match status" value="1"/>
</dbReference>
<dbReference type="HAMAP" id="MF_02006">
    <property type="entry name" value="Tyr_tRNA_synth_type1"/>
    <property type="match status" value="1"/>
</dbReference>
<dbReference type="InterPro" id="IPR002305">
    <property type="entry name" value="aa-tRNA-synth_Ic"/>
</dbReference>
<dbReference type="InterPro" id="IPR014729">
    <property type="entry name" value="Rossmann-like_a/b/a_fold"/>
</dbReference>
<dbReference type="InterPro" id="IPR002942">
    <property type="entry name" value="S4_RNA-bd"/>
</dbReference>
<dbReference type="InterPro" id="IPR036986">
    <property type="entry name" value="S4_RNA-bd_sf"/>
</dbReference>
<dbReference type="InterPro" id="IPR054608">
    <property type="entry name" value="SYY-like_C"/>
</dbReference>
<dbReference type="InterPro" id="IPR002307">
    <property type="entry name" value="Tyr-tRNA-ligase"/>
</dbReference>
<dbReference type="InterPro" id="IPR024088">
    <property type="entry name" value="Tyr-tRNA-ligase_bac-type"/>
</dbReference>
<dbReference type="InterPro" id="IPR024107">
    <property type="entry name" value="Tyr-tRNA-ligase_bac_1"/>
</dbReference>
<dbReference type="NCBIfam" id="TIGR00234">
    <property type="entry name" value="tyrS"/>
    <property type="match status" value="1"/>
</dbReference>
<dbReference type="PANTHER" id="PTHR11766:SF0">
    <property type="entry name" value="TYROSINE--TRNA LIGASE, MITOCHONDRIAL"/>
    <property type="match status" value="1"/>
</dbReference>
<dbReference type="PANTHER" id="PTHR11766">
    <property type="entry name" value="TYROSYL-TRNA SYNTHETASE"/>
    <property type="match status" value="1"/>
</dbReference>
<dbReference type="Pfam" id="PF22421">
    <property type="entry name" value="SYY_C-terminal"/>
    <property type="match status" value="1"/>
</dbReference>
<dbReference type="Pfam" id="PF00579">
    <property type="entry name" value="tRNA-synt_1b"/>
    <property type="match status" value="1"/>
</dbReference>
<dbReference type="PRINTS" id="PR01040">
    <property type="entry name" value="TRNASYNTHTYR"/>
</dbReference>
<dbReference type="SMART" id="SM00363">
    <property type="entry name" value="S4"/>
    <property type="match status" value="1"/>
</dbReference>
<dbReference type="SUPFAM" id="SSF55174">
    <property type="entry name" value="Alpha-L RNA-binding motif"/>
    <property type="match status" value="1"/>
</dbReference>
<dbReference type="SUPFAM" id="SSF52374">
    <property type="entry name" value="Nucleotidylyl transferase"/>
    <property type="match status" value="1"/>
</dbReference>
<dbReference type="PROSITE" id="PS50889">
    <property type="entry name" value="S4"/>
    <property type="match status" value="1"/>
</dbReference>